<proteinExistence type="inferred from homology"/>
<keyword id="KW-0125">Carotenoid biosynthesis</keyword>
<keyword id="KW-0274">FAD</keyword>
<keyword id="KW-0285">Flavoprotein</keyword>
<keyword id="KW-0520">NAD</keyword>
<keyword id="KW-0560">Oxidoreductase</keyword>
<keyword id="KW-1185">Reference proteome</keyword>
<reference key="1">
    <citation type="journal article" date="1996" name="DNA Res.">
        <title>Sequence analysis of the genome of the unicellular cyanobacterium Synechocystis sp. strain PCC6803. II. Sequence determination of the entire genome and assignment of potential protein-coding regions.</title>
        <authorList>
            <person name="Kaneko T."/>
            <person name="Sato S."/>
            <person name="Kotani H."/>
            <person name="Tanaka A."/>
            <person name="Asamizu E."/>
            <person name="Nakamura Y."/>
            <person name="Miyajima N."/>
            <person name="Hirosawa M."/>
            <person name="Sugiura M."/>
            <person name="Sasamoto S."/>
            <person name="Kimura T."/>
            <person name="Hosouchi T."/>
            <person name="Matsuno A."/>
            <person name="Muraki A."/>
            <person name="Nakazaki N."/>
            <person name="Naruo K."/>
            <person name="Okumura S."/>
            <person name="Shimpo S."/>
            <person name="Takeuchi C."/>
            <person name="Wada T."/>
            <person name="Watanabe A."/>
            <person name="Yamada M."/>
            <person name="Yasuda M."/>
            <person name="Tabata S."/>
        </authorList>
    </citation>
    <scope>NUCLEOTIDE SEQUENCE [LARGE SCALE GENOMIC DNA]</scope>
    <source>
        <strain>ATCC 27184 / PCC 6803 / Kazusa</strain>
    </source>
</reference>
<comment type="function">
    <text evidence="1">Catalyzes the conversion of zeta-carotene to lycopene via the intermediary of neurosporene. It carries out two consecutive desaturations (introduction of double bonds) at positions C-7 and C-7' (By similarity).</text>
</comment>
<comment type="catalytic activity">
    <reaction>
        <text>9,9'-di-cis-zeta-carotene + 2 a quinone = 7,7',9,9'-tetra-cis-lycopene + 2 a quinol</text>
        <dbReference type="Rhea" id="RHEA:30955"/>
        <dbReference type="ChEBI" id="CHEBI:24646"/>
        <dbReference type="ChEBI" id="CHEBI:48716"/>
        <dbReference type="ChEBI" id="CHEBI:62466"/>
        <dbReference type="ChEBI" id="CHEBI:132124"/>
        <dbReference type="EC" id="1.3.5.6"/>
    </reaction>
</comment>
<comment type="cofactor">
    <cofactor evidence="2">
        <name>NAD(+)</name>
        <dbReference type="ChEBI" id="CHEBI:57540"/>
    </cofactor>
    <cofactor evidence="2">
        <name>NADP(+)</name>
        <dbReference type="ChEBI" id="CHEBI:58349"/>
    </cofactor>
    <cofactor evidence="2">
        <name>FAD</name>
        <dbReference type="ChEBI" id="CHEBI:57692"/>
    </cofactor>
</comment>
<comment type="pathway">
    <text>Carotenoid biosynthesis; lycopene biosynthesis.</text>
</comment>
<comment type="similarity">
    <text evidence="2">Belongs to the zeta carotene desaturase family.</text>
</comment>
<dbReference type="EC" id="1.3.5.6"/>
<dbReference type="EMBL" id="BA000022">
    <property type="protein sequence ID" value="BAA18400.1"/>
    <property type="molecule type" value="Genomic_DNA"/>
</dbReference>
<dbReference type="PIR" id="S76141">
    <property type="entry name" value="S76141"/>
</dbReference>
<dbReference type="SMR" id="P74306"/>
<dbReference type="IntAct" id="P74306">
    <property type="interactions" value="1"/>
</dbReference>
<dbReference type="STRING" id="1148.gene:10499276"/>
<dbReference type="PaxDb" id="1148-1653487"/>
<dbReference type="EnsemblBacteria" id="BAA18400">
    <property type="protein sequence ID" value="BAA18400"/>
    <property type="gene ID" value="BAA18400"/>
</dbReference>
<dbReference type="KEGG" id="syn:slr0940"/>
<dbReference type="eggNOG" id="COG3349">
    <property type="taxonomic scope" value="Bacteria"/>
</dbReference>
<dbReference type="InParanoid" id="P74306"/>
<dbReference type="PhylomeDB" id="P74306"/>
<dbReference type="UniPathway" id="UPA00803"/>
<dbReference type="Proteomes" id="UP000001425">
    <property type="component" value="Chromosome"/>
</dbReference>
<dbReference type="GO" id="GO:0016719">
    <property type="term" value="F:9,9'-di-cis-zeta-carotene desaturase activity"/>
    <property type="evidence" value="ECO:0007669"/>
    <property type="project" value="UniProtKB-EC"/>
</dbReference>
<dbReference type="GO" id="GO:0016491">
    <property type="term" value="F:oxidoreductase activity"/>
    <property type="evidence" value="ECO:0000318"/>
    <property type="project" value="GO_Central"/>
</dbReference>
<dbReference type="GO" id="GO:0016117">
    <property type="term" value="P:carotenoid biosynthetic process"/>
    <property type="evidence" value="ECO:0007669"/>
    <property type="project" value="UniProtKB-KW"/>
</dbReference>
<dbReference type="FunFam" id="3.50.50.60:FF:000111">
    <property type="entry name" value="Zeta-carotene desaturase"/>
    <property type="match status" value="1"/>
</dbReference>
<dbReference type="Gene3D" id="3.50.50.60">
    <property type="entry name" value="FAD/NAD(P)-binding domain"/>
    <property type="match status" value="2"/>
</dbReference>
<dbReference type="InterPro" id="IPR002937">
    <property type="entry name" value="Amino_oxidase"/>
</dbReference>
<dbReference type="InterPro" id="IPR036188">
    <property type="entry name" value="FAD/NAD-bd_sf"/>
</dbReference>
<dbReference type="InterPro" id="IPR014103">
    <property type="entry name" value="Zeta_caro_desat"/>
</dbReference>
<dbReference type="InterPro" id="IPR050464">
    <property type="entry name" value="Zeta_carotene_desat/Oxidored"/>
</dbReference>
<dbReference type="NCBIfam" id="TIGR02732">
    <property type="entry name" value="zeta_caro_desat"/>
    <property type="match status" value="1"/>
</dbReference>
<dbReference type="PANTHER" id="PTHR42923">
    <property type="entry name" value="PROTOPORPHYRINOGEN OXIDASE"/>
    <property type="match status" value="1"/>
</dbReference>
<dbReference type="PANTHER" id="PTHR42923:SF41">
    <property type="entry name" value="ZETA-CAROTENE DESATURASE, CHLOROPLASTIC_CHROMOPLASTIC"/>
    <property type="match status" value="1"/>
</dbReference>
<dbReference type="Pfam" id="PF01593">
    <property type="entry name" value="Amino_oxidase"/>
    <property type="match status" value="1"/>
</dbReference>
<dbReference type="PRINTS" id="PR00419">
    <property type="entry name" value="ADXRDTASE"/>
</dbReference>
<dbReference type="SUPFAM" id="SSF51905">
    <property type="entry name" value="FAD/NAD(P)-binding domain"/>
    <property type="match status" value="1"/>
</dbReference>
<protein>
    <recommendedName>
        <fullName>Zeta-carotene desaturase</fullName>
        <ecNumber>1.3.5.6</ecNumber>
    </recommendedName>
    <alternativeName>
        <fullName>9,9'-di-cis-zeta-carotene desaturase</fullName>
    </alternativeName>
    <alternativeName>
        <fullName>Carotene 7,8-desaturase</fullName>
    </alternativeName>
</protein>
<feature type="chain" id="PRO_0000217857" description="Zeta-carotene desaturase">
    <location>
        <begin position="1"/>
        <end position="489"/>
    </location>
</feature>
<organism>
    <name type="scientific">Synechocystis sp. (strain ATCC 27184 / PCC 6803 / Kazusa)</name>
    <dbReference type="NCBI Taxonomy" id="1111708"/>
    <lineage>
        <taxon>Bacteria</taxon>
        <taxon>Bacillati</taxon>
        <taxon>Cyanobacteriota</taxon>
        <taxon>Cyanophyceae</taxon>
        <taxon>Synechococcales</taxon>
        <taxon>Merismopediaceae</taxon>
        <taxon>Synechocystis</taxon>
    </lineage>
</organism>
<name>ZDS_SYNY3</name>
<accession>P74306</accession>
<sequence length="489" mass="54370">MRVAIVGAGLAGMATAVELVDAGHEVELYEARSFIGGKVGSWVDGDGNHIEMGLHVFFGCYYNLFNLMEKVGAKQNLRLKEHTHTFVNQGGRIGELDFRFLTGAPFNGLKAFFTTSQLDTKDKIANSIALATSPIVRGLVDFDGAMKTIRDLDRISFAEWFLSKGGNEGSLKKMWDPIAYALGFIDTENISARCMLTIFQLFAARTEASVLRMLEGSPQEYLHKPIQEYLEQRGTKFYTRHKVKEIKTKVTDGETRVTGLIINDGVETKTVTADAYVAACDVPGIKNLLPENWRTQWDFFNKIYYLDTVPVATVQLRFDGWVTEMNDPAKRKQLEQAFGLDNLLYTSDAEFSCFADLALTSPADYYRPGEGSLLQLVLTPGDPFMKESNEAIAYRVLKQVKALFPSAADLNMTWYSVIKLAQSLYREAPGMDLFRPSQATPIANFFLAGSYTQQDYIDSMEGATLSGRQAAQAILANQARLQTAVLASQ</sequence>
<evidence type="ECO:0000250" key="1"/>
<evidence type="ECO:0000305" key="2"/>
<gene>
    <name type="primary">crtQ</name>
    <name type="ordered locus">slr0940</name>
</gene>